<proteinExistence type="inferred from homology"/>
<protein>
    <recommendedName>
        <fullName evidence="1">Adenylosuccinate synthetase</fullName>
        <shortName evidence="1">AMPSase</shortName>
        <shortName evidence="1">AdSS</shortName>
        <ecNumber evidence="1">6.3.4.4</ecNumber>
    </recommendedName>
    <alternativeName>
        <fullName evidence="1">IMP--aspartate ligase</fullName>
    </alternativeName>
</protein>
<comment type="function">
    <text evidence="1">Plays an important role in the de novo pathway of purine nucleotide biosynthesis. Catalyzes the first committed step in the biosynthesis of AMP from IMP.</text>
</comment>
<comment type="catalytic activity">
    <reaction evidence="1">
        <text>IMP + L-aspartate + GTP = N(6)-(1,2-dicarboxyethyl)-AMP + GDP + phosphate + 2 H(+)</text>
        <dbReference type="Rhea" id="RHEA:15753"/>
        <dbReference type="ChEBI" id="CHEBI:15378"/>
        <dbReference type="ChEBI" id="CHEBI:29991"/>
        <dbReference type="ChEBI" id="CHEBI:37565"/>
        <dbReference type="ChEBI" id="CHEBI:43474"/>
        <dbReference type="ChEBI" id="CHEBI:57567"/>
        <dbReference type="ChEBI" id="CHEBI:58053"/>
        <dbReference type="ChEBI" id="CHEBI:58189"/>
        <dbReference type="EC" id="6.3.4.4"/>
    </reaction>
</comment>
<comment type="cofactor">
    <cofactor evidence="1">
        <name>Mg(2+)</name>
        <dbReference type="ChEBI" id="CHEBI:18420"/>
    </cofactor>
    <text evidence="1">Binds 1 Mg(2+) ion per subunit.</text>
</comment>
<comment type="pathway">
    <text evidence="1">Purine metabolism; AMP biosynthesis via de novo pathway; AMP from IMP: step 1/2.</text>
</comment>
<comment type="subunit">
    <text evidence="1">Homodimer.</text>
</comment>
<comment type="subcellular location">
    <subcellularLocation>
        <location evidence="1">Cytoplasm</location>
    </subcellularLocation>
</comment>
<comment type="similarity">
    <text evidence="1">Belongs to the adenylosuccinate synthetase family.</text>
</comment>
<comment type="sequence caution" evidence="2">
    <conflict type="erroneous initiation">
        <sequence resource="EMBL-CDS" id="AAW74169"/>
    </conflict>
</comment>
<feature type="chain" id="PRO_0000224337" description="Adenylosuccinate synthetase">
    <location>
        <begin position="1"/>
        <end position="430"/>
    </location>
</feature>
<feature type="active site" description="Proton acceptor" evidence="1">
    <location>
        <position position="14"/>
    </location>
</feature>
<feature type="active site" description="Proton donor" evidence="1">
    <location>
        <position position="42"/>
    </location>
</feature>
<feature type="binding site" evidence="1">
    <location>
        <begin position="13"/>
        <end position="19"/>
    </location>
    <ligand>
        <name>GTP</name>
        <dbReference type="ChEBI" id="CHEBI:37565"/>
    </ligand>
</feature>
<feature type="binding site" description="in other chain" evidence="1">
    <location>
        <begin position="14"/>
        <end position="17"/>
    </location>
    <ligand>
        <name>IMP</name>
        <dbReference type="ChEBI" id="CHEBI:58053"/>
        <note>ligand shared between dimeric partners</note>
    </ligand>
</feature>
<feature type="binding site" evidence="1">
    <location>
        <position position="14"/>
    </location>
    <ligand>
        <name>Mg(2+)</name>
        <dbReference type="ChEBI" id="CHEBI:18420"/>
    </ligand>
</feature>
<feature type="binding site" description="in other chain" evidence="1">
    <location>
        <begin position="39"/>
        <end position="42"/>
    </location>
    <ligand>
        <name>IMP</name>
        <dbReference type="ChEBI" id="CHEBI:58053"/>
        <note>ligand shared between dimeric partners</note>
    </ligand>
</feature>
<feature type="binding site" evidence="1">
    <location>
        <begin position="41"/>
        <end position="43"/>
    </location>
    <ligand>
        <name>GTP</name>
        <dbReference type="ChEBI" id="CHEBI:37565"/>
    </ligand>
</feature>
<feature type="binding site" evidence="1">
    <location>
        <position position="41"/>
    </location>
    <ligand>
        <name>Mg(2+)</name>
        <dbReference type="ChEBI" id="CHEBI:18420"/>
    </ligand>
</feature>
<feature type="binding site" description="in other chain" evidence="1">
    <location>
        <position position="130"/>
    </location>
    <ligand>
        <name>IMP</name>
        <dbReference type="ChEBI" id="CHEBI:58053"/>
        <note>ligand shared between dimeric partners</note>
    </ligand>
</feature>
<feature type="binding site" evidence="1">
    <location>
        <position position="144"/>
    </location>
    <ligand>
        <name>IMP</name>
        <dbReference type="ChEBI" id="CHEBI:58053"/>
        <note>ligand shared between dimeric partners</note>
    </ligand>
</feature>
<feature type="binding site" description="in other chain" evidence="1">
    <location>
        <position position="225"/>
    </location>
    <ligand>
        <name>IMP</name>
        <dbReference type="ChEBI" id="CHEBI:58053"/>
        <note>ligand shared between dimeric partners</note>
    </ligand>
</feature>
<feature type="binding site" description="in other chain" evidence="1">
    <location>
        <position position="240"/>
    </location>
    <ligand>
        <name>IMP</name>
        <dbReference type="ChEBI" id="CHEBI:58053"/>
        <note>ligand shared between dimeric partners</note>
    </ligand>
</feature>
<feature type="binding site" evidence="1">
    <location>
        <begin position="300"/>
        <end position="306"/>
    </location>
    <ligand>
        <name>substrate</name>
    </ligand>
</feature>
<feature type="binding site" description="in other chain" evidence="1">
    <location>
        <position position="304"/>
    </location>
    <ligand>
        <name>IMP</name>
        <dbReference type="ChEBI" id="CHEBI:58053"/>
        <note>ligand shared between dimeric partners</note>
    </ligand>
</feature>
<feature type="binding site" evidence="1">
    <location>
        <position position="306"/>
    </location>
    <ligand>
        <name>GTP</name>
        <dbReference type="ChEBI" id="CHEBI:37565"/>
    </ligand>
</feature>
<feature type="binding site" evidence="1">
    <location>
        <begin position="332"/>
        <end position="334"/>
    </location>
    <ligand>
        <name>GTP</name>
        <dbReference type="ChEBI" id="CHEBI:37565"/>
    </ligand>
</feature>
<feature type="binding site" evidence="1">
    <location>
        <begin position="414"/>
        <end position="416"/>
    </location>
    <ligand>
        <name>GTP</name>
        <dbReference type="ChEBI" id="CHEBI:37565"/>
    </ligand>
</feature>
<keyword id="KW-0963">Cytoplasm</keyword>
<keyword id="KW-0342">GTP-binding</keyword>
<keyword id="KW-0436">Ligase</keyword>
<keyword id="KW-0460">Magnesium</keyword>
<keyword id="KW-0479">Metal-binding</keyword>
<keyword id="KW-0547">Nucleotide-binding</keyword>
<keyword id="KW-0658">Purine biosynthesis</keyword>
<keyword id="KW-1185">Reference proteome</keyword>
<sequence length="430" mass="46178">MGQSVVVLGAQWGDEGKGKIVDLLTEEIGAVVRFQGGHNAGHTLVINGKKTVLHLIPSGILRDDALCLIGNGVVISPAALIKEVSELEDAGVEVRSRLKISPAAPLIMPYHIALDQAREKAAGGKAIGTTGRGIGPAYEDKVARRGIRIADLHYPPQLEELLRTALDYHNFVLTKYLGVEAVDFQKTYDEALAFGDYVQPMKSDVAGILHDLRKQGKRVLFEGAQGALLDIDHGTYPYVTSSNTTVGGALAGTGVGADAIDYVLGIAKAYATRVGGGPFPTELDDAVGQGIRDRGAEYGASTGRPRRCGWMDIVALKRAVAINGISGLCITKLDVLDGMEKLKVCIAYEYRGKRTEYAPLDAQGWEECTPVYLEFPGWTENTHGITEWDKLPVAARAYLRALEELAGCPISIVSTGPDRDHTMVLQDPFA</sequence>
<accession>Q5H4F2</accession>
<gene>
    <name evidence="1" type="primary">purA</name>
    <name type="ordered locus">XOO0915</name>
</gene>
<name>PURA_XANOR</name>
<organism>
    <name type="scientific">Xanthomonas oryzae pv. oryzae (strain KACC10331 / KXO85)</name>
    <dbReference type="NCBI Taxonomy" id="291331"/>
    <lineage>
        <taxon>Bacteria</taxon>
        <taxon>Pseudomonadati</taxon>
        <taxon>Pseudomonadota</taxon>
        <taxon>Gammaproteobacteria</taxon>
        <taxon>Lysobacterales</taxon>
        <taxon>Lysobacteraceae</taxon>
        <taxon>Xanthomonas</taxon>
    </lineage>
</organism>
<reference key="1">
    <citation type="journal article" date="2005" name="Nucleic Acids Res.">
        <title>The genome sequence of Xanthomonas oryzae pathovar oryzae KACC10331, the bacterial blight pathogen of rice.</title>
        <authorList>
            <person name="Lee B.-M."/>
            <person name="Park Y.-J."/>
            <person name="Park D.-S."/>
            <person name="Kang H.-W."/>
            <person name="Kim J.-G."/>
            <person name="Song E.-S."/>
            <person name="Park I.-C."/>
            <person name="Yoon U.-H."/>
            <person name="Hahn J.-H."/>
            <person name="Koo B.-S."/>
            <person name="Lee G.-B."/>
            <person name="Kim H."/>
            <person name="Park H.-S."/>
            <person name="Yoon K.-O."/>
            <person name="Kim J.-H."/>
            <person name="Jung C.-H."/>
            <person name="Koh N.-H."/>
            <person name="Seo J.-S."/>
            <person name="Go S.-J."/>
        </authorList>
    </citation>
    <scope>NUCLEOTIDE SEQUENCE [LARGE SCALE GENOMIC DNA]</scope>
    <source>
        <strain>KACC10331 / KXO85</strain>
    </source>
</reference>
<dbReference type="EC" id="6.3.4.4" evidence="1"/>
<dbReference type="EMBL" id="AE013598">
    <property type="protein sequence ID" value="AAW74169.1"/>
    <property type="status" value="ALT_INIT"/>
    <property type="molecule type" value="Genomic_DNA"/>
</dbReference>
<dbReference type="SMR" id="Q5H4F2"/>
<dbReference type="STRING" id="291331.XOO0915"/>
<dbReference type="KEGG" id="xoo:XOO0915"/>
<dbReference type="PATRIC" id="fig|291331.8.peg.1023"/>
<dbReference type="HOGENOM" id="CLU_029848_0_0_6"/>
<dbReference type="UniPathway" id="UPA00075">
    <property type="reaction ID" value="UER00335"/>
</dbReference>
<dbReference type="Proteomes" id="UP000006735">
    <property type="component" value="Chromosome"/>
</dbReference>
<dbReference type="GO" id="GO:0005737">
    <property type="term" value="C:cytoplasm"/>
    <property type="evidence" value="ECO:0007669"/>
    <property type="project" value="UniProtKB-SubCell"/>
</dbReference>
<dbReference type="GO" id="GO:0004019">
    <property type="term" value="F:adenylosuccinate synthase activity"/>
    <property type="evidence" value="ECO:0007669"/>
    <property type="project" value="UniProtKB-UniRule"/>
</dbReference>
<dbReference type="GO" id="GO:0005525">
    <property type="term" value="F:GTP binding"/>
    <property type="evidence" value="ECO:0007669"/>
    <property type="project" value="UniProtKB-UniRule"/>
</dbReference>
<dbReference type="GO" id="GO:0000287">
    <property type="term" value="F:magnesium ion binding"/>
    <property type="evidence" value="ECO:0007669"/>
    <property type="project" value="UniProtKB-UniRule"/>
</dbReference>
<dbReference type="GO" id="GO:0044208">
    <property type="term" value="P:'de novo' AMP biosynthetic process"/>
    <property type="evidence" value="ECO:0007669"/>
    <property type="project" value="UniProtKB-UniRule"/>
</dbReference>
<dbReference type="GO" id="GO:0046040">
    <property type="term" value="P:IMP metabolic process"/>
    <property type="evidence" value="ECO:0007669"/>
    <property type="project" value="TreeGrafter"/>
</dbReference>
<dbReference type="CDD" id="cd03108">
    <property type="entry name" value="AdSS"/>
    <property type="match status" value="1"/>
</dbReference>
<dbReference type="FunFam" id="1.10.300.10:FF:000001">
    <property type="entry name" value="Adenylosuccinate synthetase"/>
    <property type="match status" value="1"/>
</dbReference>
<dbReference type="FunFam" id="3.90.170.10:FF:000001">
    <property type="entry name" value="Adenylosuccinate synthetase"/>
    <property type="match status" value="1"/>
</dbReference>
<dbReference type="Gene3D" id="3.40.440.10">
    <property type="entry name" value="Adenylosuccinate Synthetase, subunit A, domain 1"/>
    <property type="match status" value="1"/>
</dbReference>
<dbReference type="Gene3D" id="1.10.300.10">
    <property type="entry name" value="Adenylosuccinate Synthetase, subunit A, domain 2"/>
    <property type="match status" value="1"/>
</dbReference>
<dbReference type="Gene3D" id="3.90.170.10">
    <property type="entry name" value="Adenylosuccinate Synthetase, subunit A, domain 3"/>
    <property type="match status" value="1"/>
</dbReference>
<dbReference type="HAMAP" id="MF_00011">
    <property type="entry name" value="Adenylosucc_synth"/>
    <property type="match status" value="1"/>
</dbReference>
<dbReference type="InterPro" id="IPR018220">
    <property type="entry name" value="Adenylosuccin_syn_GTP-bd"/>
</dbReference>
<dbReference type="InterPro" id="IPR033128">
    <property type="entry name" value="Adenylosuccin_syn_Lys_AS"/>
</dbReference>
<dbReference type="InterPro" id="IPR042109">
    <property type="entry name" value="Adenylosuccinate_synth_dom1"/>
</dbReference>
<dbReference type="InterPro" id="IPR042110">
    <property type="entry name" value="Adenylosuccinate_synth_dom2"/>
</dbReference>
<dbReference type="InterPro" id="IPR042111">
    <property type="entry name" value="Adenylosuccinate_synth_dom3"/>
</dbReference>
<dbReference type="InterPro" id="IPR001114">
    <property type="entry name" value="Adenylosuccinate_synthetase"/>
</dbReference>
<dbReference type="InterPro" id="IPR027417">
    <property type="entry name" value="P-loop_NTPase"/>
</dbReference>
<dbReference type="NCBIfam" id="NF002223">
    <property type="entry name" value="PRK01117.1"/>
    <property type="match status" value="1"/>
</dbReference>
<dbReference type="NCBIfam" id="TIGR00184">
    <property type="entry name" value="purA"/>
    <property type="match status" value="1"/>
</dbReference>
<dbReference type="PANTHER" id="PTHR11846">
    <property type="entry name" value="ADENYLOSUCCINATE SYNTHETASE"/>
    <property type="match status" value="1"/>
</dbReference>
<dbReference type="PANTHER" id="PTHR11846:SF0">
    <property type="entry name" value="ADENYLOSUCCINATE SYNTHETASE"/>
    <property type="match status" value="1"/>
</dbReference>
<dbReference type="Pfam" id="PF00709">
    <property type="entry name" value="Adenylsucc_synt"/>
    <property type="match status" value="1"/>
</dbReference>
<dbReference type="SMART" id="SM00788">
    <property type="entry name" value="Adenylsucc_synt"/>
    <property type="match status" value="1"/>
</dbReference>
<dbReference type="SUPFAM" id="SSF52540">
    <property type="entry name" value="P-loop containing nucleoside triphosphate hydrolases"/>
    <property type="match status" value="1"/>
</dbReference>
<dbReference type="PROSITE" id="PS01266">
    <property type="entry name" value="ADENYLOSUCCIN_SYN_1"/>
    <property type="match status" value="1"/>
</dbReference>
<dbReference type="PROSITE" id="PS00513">
    <property type="entry name" value="ADENYLOSUCCIN_SYN_2"/>
    <property type="match status" value="1"/>
</dbReference>
<evidence type="ECO:0000255" key="1">
    <source>
        <dbReference type="HAMAP-Rule" id="MF_00011"/>
    </source>
</evidence>
<evidence type="ECO:0000305" key="2"/>